<feature type="chain" id="PRO_0000362262" description="ATP synthase subunit a">
    <location>
        <begin position="1"/>
        <end position="226"/>
    </location>
</feature>
<feature type="transmembrane region" description="Helical" evidence="1">
    <location>
        <begin position="17"/>
        <end position="37"/>
    </location>
</feature>
<feature type="transmembrane region" description="Helical" evidence="1">
    <location>
        <begin position="79"/>
        <end position="99"/>
    </location>
</feature>
<feature type="transmembrane region" description="Helical" evidence="1">
    <location>
        <begin position="105"/>
        <end position="125"/>
    </location>
</feature>
<feature type="transmembrane region" description="Helical" evidence="1">
    <location>
        <begin position="168"/>
        <end position="188"/>
    </location>
</feature>
<feature type="transmembrane region" description="Helical" evidence="1">
    <location>
        <begin position="200"/>
        <end position="222"/>
    </location>
</feature>
<protein>
    <recommendedName>
        <fullName evidence="1">ATP synthase subunit a</fullName>
    </recommendedName>
    <alternativeName>
        <fullName evidence="1">ATP synthase F0 sector subunit a</fullName>
    </alternativeName>
    <alternativeName>
        <fullName evidence="1">F-ATPase subunit 6</fullName>
    </alternativeName>
</protein>
<proteinExistence type="inferred from homology"/>
<reference key="1">
    <citation type="submission" date="2006-11" db="EMBL/GenBank/DDBJ databases">
        <title>Sequence of Campylobacter fetus subsp. fetus 82-40.</title>
        <authorList>
            <person name="Fouts D.E."/>
            <person name="Nelson K.E."/>
        </authorList>
    </citation>
    <scope>NUCLEOTIDE SEQUENCE [LARGE SCALE GENOMIC DNA]</scope>
    <source>
        <strain>82-40</strain>
    </source>
</reference>
<comment type="function">
    <text evidence="1">Key component of the proton channel; it plays a direct role in the translocation of protons across the membrane.</text>
</comment>
<comment type="subunit">
    <text evidence="1">F-type ATPases have 2 components, CF(1) - the catalytic core - and CF(0) - the membrane proton channel. CF(1) has five subunits: alpha(3), beta(3), gamma(1), delta(1), epsilon(1). CF(0) has three main subunits: a(1), b(2) and c(9-12). The alpha and beta chains form an alternating ring which encloses part of the gamma chain. CF(1) is attached to CF(0) by a central stalk formed by the gamma and epsilon chains, while a peripheral stalk is formed by the delta and b chains.</text>
</comment>
<comment type="subcellular location">
    <subcellularLocation>
        <location evidence="1">Cell inner membrane</location>
        <topology evidence="1">Multi-pass membrane protein</topology>
    </subcellularLocation>
</comment>
<comment type="similarity">
    <text evidence="1">Belongs to the ATPase A chain family.</text>
</comment>
<organism>
    <name type="scientific">Campylobacter fetus subsp. fetus (strain 82-40)</name>
    <dbReference type="NCBI Taxonomy" id="360106"/>
    <lineage>
        <taxon>Bacteria</taxon>
        <taxon>Pseudomonadati</taxon>
        <taxon>Campylobacterota</taxon>
        <taxon>Epsilonproteobacteria</taxon>
        <taxon>Campylobacterales</taxon>
        <taxon>Campylobacteraceae</taxon>
        <taxon>Campylobacter</taxon>
    </lineage>
</organism>
<name>ATP6_CAMFF</name>
<keyword id="KW-0066">ATP synthesis</keyword>
<keyword id="KW-0997">Cell inner membrane</keyword>
<keyword id="KW-1003">Cell membrane</keyword>
<keyword id="KW-0138">CF(0)</keyword>
<keyword id="KW-0375">Hydrogen ion transport</keyword>
<keyword id="KW-0406">Ion transport</keyword>
<keyword id="KW-0472">Membrane</keyword>
<keyword id="KW-0812">Transmembrane</keyword>
<keyword id="KW-1133">Transmembrane helix</keyword>
<keyword id="KW-0813">Transport</keyword>
<gene>
    <name evidence="1" type="primary">atpB</name>
    <name type="ordered locus">CFF8240_0771</name>
</gene>
<sequence>MKELFLFSDMIMHSHTFNYLFHLILVAIIVLIVAKLATRSMQLVPRGSQNLLEAYLEGIVSMGRDVMGSDELARKYLPLVATIGLIVLTSNVIGIIPGFEAPSSSLNLTLCLALSVFLYYNFEGIRTQGIIKYFAHFMGPNKILAPLMFPIEIVSHLSRIVSLSFRLFGNIKGDDLFLMVVLSLAPWVAPLPAFALLTFMALLQTFIFMILTYVYLAGAVVVSEEH</sequence>
<dbReference type="EMBL" id="CP000487">
    <property type="protein sequence ID" value="ABK83133.1"/>
    <property type="molecule type" value="Genomic_DNA"/>
</dbReference>
<dbReference type="RefSeq" id="WP_002849211.1">
    <property type="nucleotide sequence ID" value="NC_008599.1"/>
</dbReference>
<dbReference type="SMR" id="A0RP13"/>
<dbReference type="KEGG" id="cff:CFF8240_0771"/>
<dbReference type="eggNOG" id="COG0356">
    <property type="taxonomic scope" value="Bacteria"/>
</dbReference>
<dbReference type="HOGENOM" id="CLU_041018_2_2_7"/>
<dbReference type="Proteomes" id="UP000000760">
    <property type="component" value="Chromosome"/>
</dbReference>
<dbReference type="GO" id="GO:0005886">
    <property type="term" value="C:plasma membrane"/>
    <property type="evidence" value="ECO:0007669"/>
    <property type="project" value="UniProtKB-SubCell"/>
</dbReference>
<dbReference type="GO" id="GO:0045259">
    <property type="term" value="C:proton-transporting ATP synthase complex"/>
    <property type="evidence" value="ECO:0007669"/>
    <property type="project" value="UniProtKB-KW"/>
</dbReference>
<dbReference type="GO" id="GO:0046933">
    <property type="term" value="F:proton-transporting ATP synthase activity, rotational mechanism"/>
    <property type="evidence" value="ECO:0007669"/>
    <property type="project" value="UniProtKB-UniRule"/>
</dbReference>
<dbReference type="GO" id="GO:0042777">
    <property type="term" value="P:proton motive force-driven plasma membrane ATP synthesis"/>
    <property type="evidence" value="ECO:0007669"/>
    <property type="project" value="TreeGrafter"/>
</dbReference>
<dbReference type="CDD" id="cd00310">
    <property type="entry name" value="ATP-synt_Fo_a_6"/>
    <property type="match status" value="1"/>
</dbReference>
<dbReference type="FunFam" id="1.20.120.220:FF:000006">
    <property type="entry name" value="ATP synthase subunit a"/>
    <property type="match status" value="1"/>
</dbReference>
<dbReference type="Gene3D" id="1.20.120.220">
    <property type="entry name" value="ATP synthase, F0 complex, subunit A"/>
    <property type="match status" value="1"/>
</dbReference>
<dbReference type="HAMAP" id="MF_01393">
    <property type="entry name" value="ATP_synth_a_bact"/>
    <property type="match status" value="1"/>
</dbReference>
<dbReference type="InterPro" id="IPR045082">
    <property type="entry name" value="ATP_syn_F0_a_bact/chloroplast"/>
</dbReference>
<dbReference type="InterPro" id="IPR000568">
    <property type="entry name" value="ATP_synth_F0_asu"/>
</dbReference>
<dbReference type="InterPro" id="IPR023011">
    <property type="entry name" value="ATP_synth_F0_asu_AS"/>
</dbReference>
<dbReference type="InterPro" id="IPR035908">
    <property type="entry name" value="F0_ATP_A_sf"/>
</dbReference>
<dbReference type="NCBIfam" id="TIGR01131">
    <property type="entry name" value="ATP_synt_6_or_A"/>
    <property type="match status" value="1"/>
</dbReference>
<dbReference type="NCBIfam" id="NF004481">
    <property type="entry name" value="PRK05815.2-3"/>
    <property type="match status" value="1"/>
</dbReference>
<dbReference type="PANTHER" id="PTHR42823">
    <property type="entry name" value="ATP SYNTHASE SUBUNIT A, CHLOROPLASTIC"/>
    <property type="match status" value="1"/>
</dbReference>
<dbReference type="PANTHER" id="PTHR42823:SF3">
    <property type="entry name" value="ATP SYNTHASE SUBUNIT A, CHLOROPLASTIC"/>
    <property type="match status" value="1"/>
</dbReference>
<dbReference type="Pfam" id="PF00119">
    <property type="entry name" value="ATP-synt_A"/>
    <property type="match status" value="1"/>
</dbReference>
<dbReference type="PRINTS" id="PR00123">
    <property type="entry name" value="ATPASEA"/>
</dbReference>
<dbReference type="SUPFAM" id="SSF81336">
    <property type="entry name" value="F1F0 ATP synthase subunit A"/>
    <property type="match status" value="1"/>
</dbReference>
<dbReference type="PROSITE" id="PS00449">
    <property type="entry name" value="ATPASE_A"/>
    <property type="match status" value="1"/>
</dbReference>
<accession>A0RP13</accession>
<evidence type="ECO:0000255" key="1">
    <source>
        <dbReference type="HAMAP-Rule" id="MF_01393"/>
    </source>
</evidence>